<accession>P57568</accession>
<reference key="1">
    <citation type="journal article" date="2000" name="Nature">
        <title>Genome sequence of the endocellular bacterial symbiont of aphids Buchnera sp. APS.</title>
        <authorList>
            <person name="Shigenobu S."/>
            <person name="Watanabe H."/>
            <person name="Hattori M."/>
            <person name="Sakaki Y."/>
            <person name="Ishikawa H."/>
        </authorList>
    </citation>
    <scope>NUCLEOTIDE SEQUENCE [LARGE SCALE GENOMIC DNA]</scope>
    <source>
        <strain>APS</strain>
    </source>
</reference>
<sequence length="131" mass="14208">MVKNSTSIRTRKRVKKQILDGIAHIHASFNNTIVTITDRQGNALGWATSGGSGFRGSRKSTPFAAQVAAERCAEIVKDYGIKNLEVMVKGPGPGRESTIRALNAAGFRITNITDVTPIPHNGCRPPKKRRV</sequence>
<gene>
    <name evidence="1" type="primary">rpsK</name>
    <name type="ordered locus">BU501</name>
</gene>
<protein>
    <recommendedName>
        <fullName evidence="1">Small ribosomal subunit protein uS11</fullName>
    </recommendedName>
    <alternativeName>
        <fullName evidence="2">30S ribosomal protein S11</fullName>
    </alternativeName>
</protein>
<keyword id="KW-1185">Reference proteome</keyword>
<keyword id="KW-0687">Ribonucleoprotein</keyword>
<keyword id="KW-0689">Ribosomal protein</keyword>
<keyword id="KW-0694">RNA-binding</keyword>
<keyword id="KW-0699">rRNA-binding</keyword>
<evidence type="ECO:0000255" key="1">
    <source>
        <dbReference type="HAMAP-Rule" id="MF_01310"/>
    </source>
</evidence>
<evidence type="ECO:0000305" key="2"/>
<name>RS11_BUCAI</name>
<organism>
    <name type="scientific">Buchnera aphidicola subsp. Acyrthosiphon pisum (strain APS)</name>
    <name type="common">Acyrthosiphon pisum symbiotic bacterium</name>
    <dbReference type="NCBI Taxonomy" id="107806"/>
    <lineage>
        <taxon>Bacteria</taxon>
        <taxon>Pseudomonadati</taxon>
        <taxon>Pseudomonadota</taxon>
        <taxon>Gammaproteobacteria</taxon>
        <taxon>Enterobacterales</taxon>
        <taxon>Erwiniaceae</taxon>
        <taxon>Buchnera</taxon>
    </lineage>
</organism>
<dbReference type="EMBL" id="BA000003">
    <property type="protein sequence ID" value="BAB13194.1"/>
    <property type="molecule type" value="Genomic_DNA"/>
</dbReference>
<dbReference type="RefSeq" id="NP_240308.1">
    <property type="nucleotide sequence ID" value="NC_002528.1"/>
</dbReference>
<dbReference type="RefSeq" id="WP_009874452.1">
    <property type="nucleotide sequence ID" value="NZ_AP036055.1"/>
</dbReference>
<dbReference type="SMR" id="P57568"/>
<dbReference type="STRING" id="563178.BUAP5A_494"/>
<dbReference type="EnsemblBacteria" id="BAB13194">
    <property type="protein sequence ID" value="BAB13194"/>
    <property type="gene ID" value="BAB13194"/>
</dbReference>
<dbReference type="KEGG" id="buc:BU501"/>
<dbReference type="PATRIC" id="fig|107806.10.peg.506"/>
<dbReference type="eggNOG" id="COG0100">
    <property type="taxonomic scope" value="Bacteria"/>
</dbReference>
<dbReference type="HOGENOM" id="CLU_072439_5_0_6"/>
<dbReference type="Proteomes" id="UP000001806">
    <property type="component" value="Chromosome"/>
</dbReference>
<dbReference type="GO" id="GO:1990904">
    <property type="term" value="C:ribonucleoprotein complex"/>
    <property type="evidence" value="ECO:0007669"/>
    <property type="project" value="UniProtKB-KW"/>
</dbReference>
<dbReference type="GO" id="GO:0005840">
    <property type="term" value="C:ribosome"/>
    <property type="evidence" value="ECO:0007669"/>
    <property type="project" value="UniProtKB-KW"/>
</dbReference>
<dbReference type="GO" id="GO:0019843">
    <property type="term" value="F:rRNA binding"/>
    <property type="evidence" value="ECO:0007669"/>
    <property type="project" value="UniProtKB-UniRule"/>
</dbReference>
<dbReference type="GO" id="GO:0003735">
    <property type="term" value="F:structural constituent of ribosome"/>
    <property type="evidence" value="ECO:0007669"/>
    <property type="project" value="InterPro"/>
</dbReference>
<dbReference type="GO" id="GO:0006412">
    <property type="term" value="P:translation"/>
    <property type="evidence" value="ECO:0007669"/>
    <property type="project" value="UniProtKB-UniRule"/>
</dbReference>
<dbReference type="FunFam" id="3.30.420.80:FF:000001">
    <property type="entry name" value="30S ribosomal protein S11"/>
    <property type="match status" value="1"/>
</dbReference>
<dbReference type="Gene3D" id="3.30.420.80">
    <property type="entry name" value="Ribosomal protein S11"/>
    <property type="match status" value="1"/>
</dbReference>
<dbReference type="HAMAP" id="MF_01310">
    <property type="entry name" value="Ribosomal_uS11"/>
    <property type="match status" value="1"/>
</dbReference>
<dbReference type="InterPro" id="IPR001971">
    <property type="entry name" value="Ribosomal_uS11"/>
</dbReference>
<dbReference type="InterPro" id="IPR019981">
    <property type="entry name" value="Ribosomal_uS11_bac-type"/>
</dbReference>
<dbReference type="InterPro" id="IPR018102">
    <property type="entry name" value="Ribosomal_uS11_CS"/>
</dbReference>
<dbReference type="InterPro" id="IPR036967">
    <property type="entry name" value="Ribosomal_uS11_sf"/>
</dbReference>
<dbReference type="NCBIfam" id="NF003698">
    <property type="entry name" value="PRK05309.1"/>
    <property type="match status" value="1"/>
</dbReference>
<dbReference type="NCBIfam" id="TIGR03632">
    <property type="entry name" value="uS11_bact"/>
    <property type="match status" value="1"/>
</dbReference>
<dbReference type="PANTHER" id="PTHR11759">
    <property type="entry name" value="40S RIBOSOMAL PROTEIN S14/30S RIBOSOMAL PROTEIN S11"/>
    <property type="match status" value="1"/>
</dbReference>
<dbReference type="Pfam" id="PF00411">
    <property type="entry name" value="Ribosomal_S11"/>
    <property type="match status" value="1"/>
</dbReference>
<dbReference type="PIRSF" id="PIRSF002131">
    <property type="entry name" value="Ribosomal_S11"/>
    <property type="match status" value="1"/>
</dbReference>
<dbReference type="SUPFAM" id="SSF53137">
    <property type="entry name" value="Translational machinery components"/>
    <property type="match status" value="1"/>
</dbReference>
<dbReference type="PROSITE" id="PS00054">
    <property type="entry name" value="RIBOSOMAL_S11"/>
    <property type="match status" value="1"/>
</dbReference>
<comment type="function">
    <text evidence="1">Located on the platform of the 30S subunit, it bridges several disparate RNA helices of the 16S rRNA. Forms part of the Shine-Dalgarno cleft in the 70S ribosome.</text>
</comment>
<comment type="subunit">
    <text evidence="1">Part of the 30S ribosomal subunit. Interacts with proteins S7 and S18. Binds to IF-3.</text>
</comment>
<comment type="similarity">
    <text evidence="1">Belongs to the universal ribosomal protein uS11 family.</text>
</comment>
<feature type="chain" id="PRO_0000123120" description="Small ribosomal subunit protein uS11">
    <location>
        <begin position="1"/>
        <end position="131"/>
    </location>
</feature>
<proteinExistence type="inferred from homology"/>